<protein>
    <recommendedName>
        <fullName evidence="1">HPr kinase/phosphorylase</fullName>
        <shortName evidence="1">HPrK/P</shortName>
        <ecNumber evidence="1">2.7.11.-</ecNumber>
        <ecNumber evidence="1">2.7.4.-</ecNumber>
    </recommendedName>
    <alternativeName>
        <fullName evidence="1">HPr(Ser) kinase/phosphorylase</fullName>
    </alternativeName>
</protein>
<feature type="chain" id="PRO_1000165076" description="HPr kinase/phosphorylase">
    <location>
        <begin position="1"/>
        <end position="311"/>
    </location>
</feature>
<feature type="region of interest" description="Important for the catalytic mechanism of both phosphorylation and dephosphorylation" evidence="1">
    <location>
        <begin position="201"/>
        <end position="210"/>
    </location>
</feature>
<feature type="region of interest" description="Important for the catalytic mechanism of dephosphorylation" evidence="1">
    <location>
        <begin position="264"/>
        <end position="269"/>
    </location>
</feature>
<feature type="active site" evidence="1">
    <location>
        <position position="138"/>
    </location>
</feature>
<feature type="active site" evidence="1">
    <location>
        <position position="159"/>
    </location>
</feature>
<feature type="active site" description="Proton acceptor; for phosphorylation activity. Proton donor; for dephosphorylation activity" evidence="1">
    <location>
        <position position="177"/>
    </location>
</feature>
<feature type="active site" evidence="1">
    <location>
        <position position="243"/>
    </location>
</feature>
<feature type="binding site" evidence="1">
    <location>
        <begin position="153"/>
        <end position="160"/>
    </location>
    <ligand>
        <name>ATP</name>
        <dbReference type="ChEBI" id="CHEBI:30616"/>
    </ligand>
</feature>
<feature type="binding site" evidence="1">
    <location>
        <position position="160"/>
    </location>
    <ligand>
        <name>Mg(2+)</name>
        <dbReference type="ChEBI" id="CHEBI:18420"/>
    </ligand>
</feature>
<feature type="binding site" evidence="1">
    <location>
        <position position="202"/>
    </location>
    <ligand>
        <name>Mg(2+)</name>
        <dbReference type="ChEBI" id="CHEBI:18420"/>
    </ligand>
</feature>
<sequence>MSVLVKEVIEKLRLDIVYGEPELLEKEINTADITRPGLEMTGYFDYYTPERIQLLGMKEWSYLISMPSNSRYEVLKKMFLPETPAVIVARGLVVPEEMLKAARECKIAILTSRAATSRLSGELSSYLDSRLAERTSVHGVLMDIYGMGVLIQGDSGIGKSETGLELVKRGHRLVADDRVDIFAKDEITLWGEPAEILKHLIEIRGVGIIDVMSLYGASAVKDSSQVQLAVYLENYDTHKTFDRLGNNAEELEVSGVAIPRIRIPVKTGRNISVVIEAAAMNYRAKEMGFDATRLFDERLTSLIARNEVQNA</sequence>
<dbReference type="EC" id="2.7.11.-" evidence="1"/>
<dbReference type="EC" id="2.7.4.-" evidence="1"/>
<dbReference type="EMBL" id="CP000918">
    <property type="protein sequence ID" value="ACO17483.1"/>
    <property type="molecule type" value="Genomic_DNA"/>
</dbReference>
<dbReference type="RefSeq" id="WP_000115143.1">
    <property type="nucleotide sequence ID" value="NC_012468.1"/>
</dbReference>
<dbReference type="SMR" id="C1C812"/>
<dbReference type="KEGG" id="snm:SP70585_1452"/>
<dbReference type="HOGENOM" id="CLU_052030_0_1_9"/>
<dbReference type="Proteomes" id="UP000002211">
    <property type="component" value="Chromosome"/>
</dbReference>
<dbReference type="GO" id="GO:0005524">
    <property type="term" value="F:ATP binding"/>
    <property type="evidence" value="ECO:0007669"/>
    <property type="project" value="UniProtKB-UniRule"/>
</dbReference>
<dbReference type="GO" id="GO:0000287">
    <property type="term" value="F:magnesium ion binding"/>
    <property type="evidence" value="ECO:0007669"/>
    <property type="project" value="UniProtKB-UniRule"/>
</dbReference>
<dbReference type="GO" id="GO:0000155">
    <property type="term" value="F:phosphorelay sensor kinase activity"/>
    <property type="evidence" value="ECO:0007669"/>
    <property type="project" value="InterPro"/>
</dbReference>
<dbReference type="GO" id="GO:0004674">
    <property type="term" value="F:protein serine/threonine kinase activity"/>
    <property type="evidence" value="ECO:0007669"/>
    <property type="project" value="UniProtKB-KW"/>
</dbReference>
<dbReference type="GO" id="GO:0004712">
    <property type="term" value="F:protein serine/threonine/tyrosine kinase activity"/>
    <property type="evidence" value="ECO:0007669"/>
    <property type="project" value="UniProtKB-UniRule"/>
</dbReference>
<dbReference type="GO" id="GO:0006109">
    <property type="term" value="P:regulation of carbohydrate metabolic process"/>
    <property type="evidence" value="ECO:0007669"/>
    <property type="project" value="UniProtKB-UniRule"/>
</dbReference>
<dbReference type="CDD" id="cd01918">
    <property type="entry name" value="HprK_C"/>
    <property type="match status" value="1"/>
</dbReference>
<dbReference type="FunFam" id="3.40.1390.20:FF:000005">
    <property type="entry name" value="HPr kinase/phosphorylase"/>
    <property type="match status" value="1"/>
</dbReference>
<dbReference type="FunFam" id="3.40.50.300:FF:000174">
    <property type="entry name" value="HPr kinase/phosphorylase"/>
    <property type="match status" value="1"/>
</dbReference>
<dbReference type="Gene3D" id="3.40.1390.20">
    <property type="entry name" value="HprK N-terminal domain-like"/>
    <property type="match status" value="1"/>
</dbReference>
<dbReference type="Gene3D" id="3.40.50.300">
    <property type="entry name" value="P-loop containing nucleotide triphosphate hydrolases"/>
    <property type="match status" value="1"/>
</dbReference>
<dbReference type="HAMAP" id="MF_01249">
    <property type="entry name" value="HPr_kinase"/>
    <property type="match status" value="1"/>
</dbReference>
<dbReference type="InterPro" id="IPR003755">
    <property type="entry name" value="HPr(Ser)_kin/Pase"/>
</dbReference>
<dbReference type="InterPro" id="IPR011104">
    <property type="entry name" value="Hpr_kin/Pase_C"/>
</dbReference>
<dbReference type="InterPro" id="IPR011126">
    <property type="entry name" value="Hpr_kin/Pase_Hpr_N"/>
</dbReference>
<dbReference type="InterPro" id="IPR027417">
    <property type="entry name" value="P-loop_NTPase"/>
</dbReference>
<dbReference type="InterPro" id="IPR028979">
    <property type="entry name" value="Ser_kin/Pase_Hpr-like_N_sf"/>
</dbReference>
<dbReference type="NCBIfam" id="TIGR00679">
    <property type="entry name" value="hpr-ser"/>
    <property type="match status" value="1"/>
</dbReference>
<dbReference type="PANTHER" id="PTHR30305:SF1">
    <property type="entry name" value="HPR KINASE_PHOSPHORYLASE"/>
    <property type="match status" value="1"/>
</dbReference>
<dbReference type="PANTHER" id="PTHR30305">
    <property type="entry name" value="PROTEIN YJDM-RELATED"/>
    <property type="match status" value="1"/>
</dbReference>
<dbReference type="Pfam" id="PF07475">
    <property type="entry name" value="Hpr_kinase_C"/>
    <property type="match status" value="1"/>
</dbReference>
<dbReference type="Pfam" id="PF02603">
    <property type="entry name" value="Hpr_kinase_N"/>
    <property type="match status" value="1"/>
</dbReference>
<dbReference type="SUPFAM" id="SSF75138">
    <property type="entry name" value="HprK N-terminal domain-like"/>
    <property type="match status" value="1"/>
</dbReference>
<dbReference type="SUPFAM" id="SSF53795">
    <property type="entry name" value="PEP carboxykinase-like"/>
    <property type="match status" value="1"/>
</dbReference>
<organism>
    <name type="scientific">Streptococcus pneumoniae (strain 70585)</name>
    <dbReference type="NCBI Taxonomy" id="488221"/>
    <lineage>
        <taxon>Bacteria</taxon>
        <taxon>Bacillati</taxon>
        <taxon>Bacillota</taxon>
        <taxon>Bacilli</taxon>
        <taxon>Lactobacillales</taxon>
        <taxon>Streptococcaceae</taxon>
        <taxon>Streptococcus</taxon>
    </lineage>
</organism>
<name>HPRK_STRP7</name>
<reference key="1">
    <citation type="journal article" date="2010" name="Genome Biol.">
        <title>Structure and dynamics of the pan-genome of Streptococcus pneumoniae and closely related species.</title>
        <authorList>
            <person name="Donati C."/>
            <person name="Hiller N.L."/>
            <person name="Tettelin H."/>
            <person name="Muzzi A."/>
            <person name="Croucher N.J."/>
            <person name="Angiuoli S.V."/>
            <person name="Oggioni M."/>
            <person name="Dunning Hotopp J.C."/>
            <person name="Hu F.Z."/>
            <person name="Riley D.R."/>
            <person name="Covacci A."/>
            <person name="Mitchell T.J."/>
            <person name="Bentley S.D."/>
            <person name="Kilian M."/>
            <person name="Ehrlich G.D."/>
            <person name="Rappuoli R."/>
            <person name="Moxon E.R."/>
            <person name="Masignani V."/>
        </authorList>
    </citation>
    <scope>NUCLEOTIDE SEQUENCE [LARGE SCALE GENOMIC DNA]</scope>
    <source>
        <strain>70585</strain>
    </source>
</reference>
<gene>
    <name evidence="1" type="primary">hprK</name>
    <name type="ordered locus">SP70585_1452</name>
</gene>
<proteinExistence type="inferred from homology"/>
<accession>C1C812</accession>
<keyword id="KW-0067">ATP-binding</keyword>
<keyword id="KW-0119">Carbohydrate metabolism</keyword>
<keyword id="KW-0418">Kinase</keyword>
<keyword id="KW-0460">Magnesium</keyword>
<keyword id="KW-0479">Metal-binding</keyword>
<keyword id="KW-0511">Multifunctional enzyme</keyword>
<keyword id="KW-0547">Nucleotide-binding</keyword>
<keyword id="KW-0723">Serine/threonine-protein kinase</keyword>
<keyword id="KW-0808">Transferase</keyword>
<comment type="function">
    <text evidence="1">Catalyzes the ATP- as well as the pyrophosphate-dependent phosphorylation of a specific serine residue in HPr, a phosphocarrier protein of the phosphoenolpyruvate-dependent sugar phosphotransferase system (PTS). HprK/P also catalyzes the pyrophosphate-producing, inorganic phosphate-dependent dephosphorylation (phosphorolysis) of seryl-phosphorylated HPr (P-Ser-HPr). The two antagonistic activities of HprK/P are regulated by several intracellular metabolites, which change their concentration in response to the absence or presence of rapidly metabolisable carbon sources (glucose, fructose, etc.) in the growth medium. Therefore, by controlling the phosphorylation state of HPr, HPrK/P is a sensor enzyme that plays a major role in the regulation of carbon metabolism and sugar transport: it mediates carbon catabolite repression (CCR), and regulates PTS-catalyzed carbohydrate uptake and inducer exclusion.</text>
</comment>
<comment type="catalytic activity">
    <reaction evidence="1">
        <text>[HPr protein]-L-serine + ATP = [HPr protein]-O-phospho-L-serine + ADP + H(+)</text>
        <dbReference type="Rhea" id="RHEA:46600"/>
        <dbReference type="Rhea" id="RHEA-COMP:11602"/>
        <dbReference type="Rhea" id="RHEA-COMP:11603"/>
        <dbReference type="ChEBI" id="CHEBI:15378"/>
        <dbReference type="ChEBI" id="CHEBI:29999"/>
        <dbReference type="ChEBI" id="CHEBI:30616"/>
        <dbReference type="ChEBI" id="CHEBI:83421"/>
        <dbReference type="ChEBI" id="CHEBI:456216"/>
    </reaction>
</comment>
<comment type="catalytic activity">
    <reaction evidence="1">
        <text>[HPr protein]-O-phospho-L-serine + phosphate + H(+) = [HPr protein]-L-serine + diphosphate</text>
        <dbReference type="Rhea" id="RHEA:46604"/>
        <dbReference type="Rhea" id="RHEA-COMP:11602"/>
        <dbReference type="Rhea" id="RHEA-COMP:11603"/>
        <dbReference type="ChEBI" id="CHEBI:15378"/>
        <dbReference type="ChEBI" id="CHEBI:29999"/>
        <dbReference type="ChEBI" id="CHEBI:33019"/>
        <dbReference type="ChEBI" id="CHEBI:43474"/>
        <dbReference type="ChEBI" id="CHEBI:83421"/>
    </reaction>
</comment>
<comment type="cofactor">
    <cofactor evidence="1">
        <name>Mg(2+)</name>
        <dbReference type="ChEBI" id="CHEBI:18420"/>
    </cofactor>
</comment>
<comment type="subunit">
    <text evidence="1">Homohexamer.</text>
</comment>
<comment type="domain">
    <text evidence="1">The Walker A ATP-binding motif also binds Pi and PPi.</text>
</comment>
<comment type="miscellaneous">
    <text evidence="1">Both phosphorylation and phosphorolysis are carried out by the same active site and suggest a common mechanism for both reactions.</text>
</comment>
<comment type="similarity">
    <text evidence="1">Belongs to the HPrK/P family.</text>
</comment>
<evidence type="ECO:0000255" key="1">
    <source>
        <dbReference type="HAMAP-Rule" id="MF_01249"/>
    </source>
</evidence>